<keyword id="KW-0028">Amino-acid biosynthesis</keyword>
<keyword id="KW-0368">Histidine biosynthesis</keyword>
<keyword id="KW-0378">Hydrolase</keyword>
<keyword id="KW-0486">Methionine biosynthesis</keyword>
<keyword id="KW-0511">Multifunctional enzyme</keyword>
<keyword id="KW-0521">NADP</keyword>
<keyword id="KW-0554">One-carbon metabolism</keyword>
<keyword id="KW-0560">Oxidoreductase</keyword>
<keyword id="KW-0658">Purine biosynthesis</keyword>
<gene>
    <name evidence="1" type="primary">folD</name>
    <name type="ordered locus">BF3219</name>
</gene>
<accession>Q64RB7</accession>
<protein>
    <recommendedName>
        <fullName evidence="1">Bifunctional protein FolD</fullName>
    </recommendedName>
    <domain>
        <recommendedName>
            <fullName evidence="1">Methylenetetrahydrofolate dehydrogenase</fullName>
            <ecNumber evidence="1">1.5.1.5</ecNumber>
        </recommendedName>
    </domain>
    <domain>
        <recommendedName>
            <fullName evidence="1">Methenyltetrahydrofolate cyclohydrolase</fullName>
            <ecNumber evidence="1">3.5.4.9</ecNumber>
        </recommendedName>
    </domain>
</protein>
<comment type="function">
    <text evidence="1">Catalyzes the oxidation of 5,10-methylenetetrahydrofolate to 5,10-methenyltetrahydrofolate and then the hydrolysis of 5,10-methenyltetrahydrofolate to 10-formyltetrahydrofolate.</text>
</comment>
<comment type="catalytic activity">
    <reaction evidence="1">
        <text>(6R)-5,10-methylene-5,6,7,8-tetrahydrofolate + NADP(+) = (6R)-5,10-methenyltetrahydrofolate + NADPH</text>
        <dbReference type="Rhea" id="RHEA:22812"/>
        <dbReference type="ChEBI" id="CHEBI:15636"/>
        <dbReference type="ChEBI" id="CHEBI:57455"/>
        <dbReference type="ChEBI" id="CHEBI:57783"/>
        <dbReference type="ChEBI" id="CHEBI:58349"/>
        <dbReference type="EC" id="1.5.1.5"/>
    </reaction>
</comment>
<comment type="catalytic activity">
    <reaction evidence="1">
        <text>(6R)-5,10-methenyltetrahydrofolate + H2O = (6R)-10-formyltetrahydrofolate + H(+)</text>
        <dbReference type="Rhea" id="RHEA:23700"/>
        <dbReference type="ChEBI" id="CHEBI:15377"/>
        <dbReference type="ChEBI" id="CHEBI:15378"/>
        <dbReference type="ChEBI" id="CHEBI:57455"/>
        <dbReference type="ChEBI" id="CHEBI:195366"/>
        <dbReference type="EC" id="3.5.4.9"/>
    </reaction>
</comment>
<comment type="pathway">
    <text evidence="1">One-carbon metabolism; tetrahydrofolate interconversion.</text>
</comment>
<comment type="subunit">
    <text evidence="1">Homodimer.</text>
</comment>
<comment type="similarity">
    <text evidence="1">Belongs to the tetrahydrofolate dehydrogenase/cyclohydrolase family.</text>
</comment>
<feature type="chain" id="PRO_0000268273" description="Bifunctional protein FolD">
    <location>
        <begin position="1"/>
        <end position="293"/>
    </location>
</feature>
<feature type="binding site" evidence="1">
    <location>
        <begin position="164"/>
        <end position="166"/>
    </location>
    <ligand>
        <name>NADP(+)</name>
        <dbReference type="ChEBI" id="CHEBI:58349"/>
    </ligand>
</feature>
<feature type="binding site" evidence="1">
    <location>
        <position position="193"/>
    </location>
    <ligand>
        <name>NADP(+)</name>
        <dbReference type="ChEBI" id="CHEBI:58349"/>
    </ligand>
</feature>
<feature type="binding site" evidence="1">
    <location>
        <position position="234"/>
    </location>
    <ligand>
        <name>NADP(+)</name>
        <dbReference type="ChEBI" id="CHEBI:58349"/>
    </ligand>
</feature>
<evidence type="ECO:0000255" key="1">
    <source>
        <dbReference type="HAMAP-Rule" id="MF_01576"/>
    </source>
</evidence>
<proteinExistence type="inferred from homology"/>
<organism>
    <name type="scientific">Bacteroides fragilis (strain YCH46)</name>
    <dbReference type="NCBI Taxonomy" id="295405"/>
    <lineage>
        <taxon>Bacteria</taxon>
        <taxon>Pseudomonadati</taxon>
        <taxon>Bacteroidota</taxon>
        <taxon>Bacteroidia</taxon>
        <taxon>Bacteroidales</taxon>
        <taxon>Bacteroidaceae</taxon>
        <taxon>Bacteroides</taxon>
    </lineage>
</organism>
<reference key="1">
    <citation type="journal article" date="2004" name="Proc. Natl. Acad. Sci. U.S.A.">
        <title>Genomic analysis of Bacteroides fragilis reveals extensive DNA inversions regulating cell surface adaptation.</title>
        <authorList>
            <person name="Kuwahara T."/>
            <person name="Yamashita A."/>
            <person name="Hirakawa H."/>
            <person name="Nakayama H."/>
            <person name="Toh H."/>
            <person name="Okada N."/>
            <person name="Kuhara S."/>
            <person name="Hattori M."/>
            <person name="Hayashi T."/>
            <person name="Ohnishi Y."/>
        </authorList>
    </citation>
    <scope>NUCLEOTIDE SEQUENCE [LARGE SCALE GENOMIC DNA]</scope>
    <source>
        <strain>YCH46</strain>
    </source>
</reference>
<dbReference type="EC" id="1.5.1.5" evidence="1"/>
<dbReference type="EC" id="3.5.4.9" evidence="1"/>
<dbReference type="EMBL" id="AP006841">
    <property type="protein sequence ID" value="BAD49964.1"/>
    <property type="molecule type" value="Genomic_DNA"/>
</dbReference>
<dbReference type="RefSeq" id="WP_005780414.1">
    <property type="nucleotide sequence ID" value="NZ_UYXF01000011.1"/>
</dbReference>
<dbReference type="RefSeq" id="YP_100498.1">
    <property type="nucleotide sequence ID" value="NC_006347.1"/>
</dbReference>
<dbReference type="SMR" id="Q64RB7"/>
<dbReference type="STRING" id="295405.BF3219"/>
<dbReference type="GeneID" id="60367697"/>
<dbReference type="KEGG" id="bfr:BF3219"/>
<dbReference type="PATRIC" id="fig|295405.11.peg.3088"/>
<dbReference type="HOGENOM" id="CLU_034045_2_1_10"/>
<dbReference type="OrthoDB" id="9803580at2"/>
<dbReference type="UniPathway" id="UPA00193"/>
<dbReference type="Proteomes" id="UP000002197">
    <property type="component" value="Chromosome"/>
</dbReference>
<dbReference type="GO" id="GO:0005829">
    <property type="term" value="C:cytosol"/>
    <property type="evidence" value="ECO:0007669"/>
    <property type="project" value="TreeGrafter"/>
</dbReference>
<dbReference type="GO" id="GO:0004477">
    <property type="term" value="F:methenyltetrahydrofolate cyclohydrolase activity"/>
    <property type="evidence" value="ECO:0007669"/>
    <property type="project" value="UniProtKB-UniRule"/>
</dbReference>
<dbReference type="GO" id="GO:0004488">
    <property type="term" value="F:methylenetetrahydrofolate dehydrogenase (NADP+) activity"/>
    <property type="evidence" value="ECO:0007669"/>
    <property type="project" value="UniProtKB-UniRule"/>
</dbReference>
<dbReference type="GO" id="GO:0000105">
    <property type="term" value="P:L-histidine biosynthetic process"/>
    <property type="evidence" value="ECO:0007669"/>
    <property type="project" value="UniProtKB-KW"/>
</dbReference>
<dbReference type="GO" id="GO:0009086">
    <property type="term" value="P:methionine biosynthetic process"/>
    <property type="evidence" value="ECO:0007669"/>
    <property type="project" value="UniProtKB-KW"/>
</dbReference>
<dbReference type="GO" id="GO:0006164">
    <property type="term" value="P:purine nucleotide biosynthetic process"/>
    <property type="evidence" value="ECO:0007669"/>
    <property type="project" value="UniProtKB-KW"/>
</dbReference>
<dbReference type="GO" id="GO:0035999">
    <property type="term" value="P:tetrahydrofolate interconversion"/>
    <property type="evidence" value="ECO:0007669"/>
    <property type="project" value="UniProtKB-UniRule"/>
</dbReference>
<dbReference type="CDD" id="cd01080">
    <property type="entry name" value="NAD_bind_m-THF_DH_Cyclohyd"/>
    <property type="match status" value="1"/>
</dbReference>
<dbReference type="FunFam" id="3.40.50.10860:FF:000001">
    <property type="entry name" value="Bifunctional protein FolD"/>
    <property type="match status" value="1"/>
</dbReference>
<dbReference type="FunFam" id="3.40.50.720:FF:000189">
    <property type="entry name" value="Bifunctional protein FolD"/>
    <property type="match status" value="1"/>
</dbReference>
<dbReference type="Gene3D" id="3.40.50.10860">
    <property type="entry name" value="Leucine Dehydrogenase, chain A, domain 1"/>
    <property type="match status" value="1"/>
</dbReference>
<dbReference type="Gene3D" id="3.40.50.720">
    <property type="entry name" value="NAD(P)-binding Rossmann-like Domain"/>
    <property type="match status" value="1"/>
</dbReference>
<dbReference type="HAMAP" id="MF_01576">
    <property type="entry name" value="THF_DHG_CYH"/>
    <property type="match status" value="1"/>
</dbReference>
<dbReference type="InterPro" id="IPR046346">
    <property type="entry name" value="Aminoacid_DH-like_N_sf"/>
</dbReference>
<dbReference type="InterPro" id="IPR036291">
    <property type="entry name" value="NAD(P)-bd_dom_sf"/>
</dbReference>
<dbReference type="InterPro" id="IPR000672">
    <property type="entry name" value="THF_DH/CycHdrlase"/>
</dbReference>
<dbReference type="InterPro" id="IPR020630">
    <property type="entry name" value="THF_DH/CycHdrlase_cat_dom"/>
</dbReference>
<dbReference type="InterPro" id="IPR020867">
    <property type="entry name" value="THF_DH/CycHdrlase_CS"/>
</dbReference>
<dbReference type="InterPro" id="IPR020631">
    <property type="entry name" value="THF_DH/CycHdrlase_NAD-bd_dom"/>
</dbReference>
<dbReference type="NCBIfam" id="NF010782">
    <property type="entry name" value="PRK14185.1"/>
    <property type="match status" value="1"/>
</dbReference>
<dbReference type="PANTHER" id="PTHR48099:SF5">
    <property type="entry name" value="C-1-TETRAHYDROFOLATE SYNTHASE, CYTOPLASMIC"/>
    <property type="match status" value="1"/>
</dbReference>
<dbReference type="PANTHER" id="PTHR48099">
    <property type="entry name" value="C-1-TETRAHYDROFOLATE SYNTHASE, CYTOPLASMIC-RELATED"/>
    <property type="match status" value="1"/>
</dbReference>
<dbReference type="Pfam" id="PF00763">
    <property type="entry name" value="THF_DHG_CYH"/>
    <property type="match status" value="1"/>
</dbReference>
<dbReference type="Pfam" id="PF02882">
    <property type="entry name" value="THF_DHG_CYH_C"/>
    <property type="match status" value="1"/>
</dbReference>
<dbReference type="PRINTS" id="PR00085">
    <property type="entry name" value="THFDHDRGNASE"/>
</dbReference>
<dbReference type="SUPFAM" id="SSF53223">
    <property type="entry name" value="Aminoacid dehydrogenase-like, N-terminal domain"/>
    <property type="match status" value="1"/>
</dbReference>
<dbReference type="SUPFAM" id="SSF51735">
    <property type="entry name" value="NAD(P)-binding Rossmann-fold domains"/>
    <property type="match status" value="1"/>
</dbReference>
<dbReference type="PROSITE" id="PS00766">
    <property type="entry name" value="THF_DHG_CYH_1"/>
    <property type="match status" value="1"/>
</dbReference>
<dbReference type="PROSITE" id="PS00767">
    <property type="entry name" value="THF_DHG_CYH_2"/>
    <property type="match status" value="1"/>
</dbReference>
<sequence>MTLIDGKAISEQVKQEIAAEVAEIVAHGGKRPHLAAILVGHDGGSETYVAAKVKACEVCGFKSSLIRYESDVTEDELLAKVRELNEDDDVDGFIVQLPLPKHISEQKVIETIDYRKDVDGFHPINVGRMSIGLPCYVSATPNGILELLKRYRIETSGKKCVVLGRSNIVGKPMAALMMQKAYPGDATVTVCHSRSKDLVKECREADIIIAALGQPNFVKAEMVKEGAVVIDVGTTRVPDASKKSGFKLTGDVKFDEVSPKCSFITPVPGGVGPMTIVSLMKNTLLAGKKAIYQ</sequence>
<name>FOLD_BACFR</name>